<sequence>MTDELNSQFTAVWNTVVAELNGDDNQYLSSFPPLTPQQRAWLTLVKPLTMAEGFALLSVPSSFVQNEIERHLRGPIVEALSRRLGENVELGVRIAAPAPGEDSEVAGAAPEVELDEVDETTEALASAHESWPSYFINRPGGADKAETPDTSLNARYTFESFVIGASNRFSHAAAVAVSEAPARAYNPLFIWGESGLGKTHLLHAAGNYAQRLFPGMRVKYVSTEEFTNDFINSLRDDRRVAFKRSYRDIDVLLVDDIQFIEGKEGIQEEFFHTFNTLHNANKQIVISSDRPPKGLATLEDRLRTRFEWGLITDVQPPELETRIAILRKKAQMDRLDVPDDVLELIASRIERNIRELEGALIRVTAFASLNKSPIELSLAEIVLRDLIPDANAIQISAATIMAVTAEYFDTTVEELRGPGKTRALAQARQIAMYLCRELTDLSLPKIGQTFGRDHTTVMYADKKVRGEMAQRREVFDHVKELTARIRQRSRH</sequence>
<accession>B1MDH6</accession>
<evidence type="ECO:0000255" key="1">
    <source>
        <dbReference type="HAMAP-Rule" id="MF_00377"/>
    </source>
</evidence>
<protein>
    <recommendedName>
        <fullName evidence="1">Chromosomal replication initiator protein DnaA</fullName>
    </recommendedName>
</protein>
<dbReference type="EMBL" id="CU458896">
    <property type="protein sequence ID" value="CAM60104.1"/>
    <property type="molecule type" value="Genomic_DNA"/>
</dbReference>
<dbReference type="RefSeq" id="WP_005079124.1">
    <property type="nucleotide sequence ID" value="NZ_MLCG01000007.1"/>
</dbReference>
<dbReference type="SMR" id="B1MDH6"/>
<dbReference type="GeneID" id="93376943"/>
<dbReference type="KEGG" id="mab:MAB_0001"/>
<dbReference type="Proteomes" id="UP000007137">
    <property type="component" value="Chromosome"/>
</dbReference>
<dbReference type="GO" id="GO:0005737">
    <property type="term" value="C:cytoplasm"/>
    <property type="evidence" value="ECO:0007669"/>
    <property type="project" value="UniProtKB-SubCell"/>
</dbReference>
<dbReference type="GO" id="GO:0005886">
    <property type="term" value="C:plasma membrane"/>
    <property type="evidence" value="ECO:0007669"/>
    <property type="project" value="TreeGrafter"/>
</dbReference>
<dbReference type="GO" id="GO:0005524">
    <property type="term" value="F:ATP binding"/>
    <property type="evidence" value="ECO:0007669"/>
    <property type="project" value="UniProtKB-UniRule"/>
</dbReference>
<dbReference type="GO" id="GO:0016887">
    <property type="term" value="F:ATP hydrolysis activity"/>
    <property type="evidence" value="ECO:0007669"/>
    <property type="project" value="InterPro"/>
</dbReference>
<dbReference type="GO" id="GO:0003688">
    <property type="term" value="F:DNA replication origin binding"/>
    <property type="evidence" value="ECO:0007669"/>
    <property type="project" value="UniProtKB-UniRule"/>
</dbReference>
<dbReference type="GO" id="GO:0008289">
    <property type="term" value="F:lipid binding"/>
    <property type="evidence" value="ECO:0007669"/>
    <property type="project" value="UniProtKB-KW"/>
</dbReference>
<dbReference type="GO" id="GO:0006270">
    <property type="term" value="P:DNA replication initiation"/>
    <property type="evidence" value="ECO:0007669"/>
    <property type="project" value="UniProtKB-UniRule"/>
</dbReference>
<dbReference type="GO" id="GO:0006275">
    <property type="term" value="P:regulation of DNA replication"/>
    <property type="evidence" value="ECO:0007669"/>
    <property type="project" value="UniProtKB-UniRule"/>
</dbReference>
<dbReference type="CDD" id="cd00009">
    <property type="entry name" value="AAA"/>
    <property type="match status" value="1"/>
</dbReference>
<dbReference type="CDD" id="cd06571">
    <property type="entry name" value="Bac_DnaA_C"/>
    <property type="match status" value="1"/>
</dbReference>
<dbReference type="FunFam" id="1.10.1750.10:FF:000002">
    <property type="entry name" value="Chromosomal replication initiator protein DnaA"/>
    <property type="match status" value="1"/>
</dbReference>
<dbReference type="FunFam" id="1.10.8.60:FF:000003">
    <property type="entry name" value="Chromosomal replication initiator protein DnaA"/>
    <property type="match status" value="1"/>
</dbReference>
<dbReference type="FunFam" id="3.40.50.300:FF:000150">
    <property type="entry name" value="Chromosomal replication initiator protein DnaA"/>
    <property type="match status" value="1"/>
</dbReference>
<dbReference type="Gene3D" id="1.10.1750.10">
    <property type="match status" value="1"/>
</dbReference>
<dbReference type="Gene3D" id="1.10.8.60">
    <property type="match status" value="1"/>
</dbReference>
<dbReference type="Gene3D" id="3.30.300.180">
    <property type="match status" value="1"/>
</dbReference>
<dbReference type="Gene3D" id="3.40.50.300">
    <property type="entry name" value="P-loop containing nucleotide triphosphate hydrolases"/>
    <property type="match status" value="1"/>
</dbReference>
<dbReference type="HAMAP" id="MF_00377">
    <property type="entry name" value="DnaA_bact"/>
    <property type="match status" value="1"/>
</dbReference>
<dbReference type="InterPro" id="IPR003593">
    <property type="entry name" value="AAA+_ATPase"/>
</dbReference>
<dbReference type="InterPro" id="IPR001957">
    <property type="entry name" value="Chromosome_initiator_DnaA"/>
</dbReference>
<dbReference type="InterPro" id="IPR020591">
    <property type="entry name" value="Chromosome_initiator_DnaA-like"/>
</dbReference>
<dbReference type="InterPro" id="IPR018312">
    <property type="entry name" value="Chromosome_initiator_DnaA_CS"/>
</dbReference>
<dbReference type="InterPro" id="IPR013159">
    <property type="entry name" value="DnaA_C"/>
</dbReference>
<dbReference type="InterPro" id="IPR013317">
    <property type="entry name" value="DnaA_dom"/>
</dbReference>
<dbReference type="InterPro" id="IPR038454">
    <property type="entry name" value="DnaA_N_sf"/>
</dbReference>
<dbReference type="InterPro" id="IPR027417">
    <property type="entry name" value="P-loop_NTPase"/>
</dbReference>
<dbReference type="InterPro" id="IPR010921">
    <property type="entry name" value="Trp_repressor/repl_initiator"/>
</dbReference>
<dbReference type="NCBIfam" id="TIGR00362">
    <property type="entry name" value="DnaA"/>
    <property type="match status" value="1"/>
</dbReference>
<dbReference type="NCBIfam" id="NF010686">
    <property type="entry name" value="PRK14086.1"/>
    <property type="match status" value="1"/>
</dbReference>
<dbReference type="PANTHER" id="PTHR30050">
    <property type="entry name" value="CHROMOSOMAL REPLICATION INITIATOR PROTEIN DNAA"/>
    <property type="match status" value="1"/>
</dbReference>
<dbReference type="PANTHER" id="PTHR30050:SF2">
    <property type="entry name" value="CHROMOSOMAL REPLICATION INITIATOR PROTEIN DNAA"/>
    <property type="match status" value="1"/>
</dbReference>
<dbReference type="Pfam" id="PF00308">
    <property type="entry name" value="Bac_DnaA"/>
    <property type="match status" value="1"/>
</dbReference>
<dbReference type="Pfam" id="PF08299">
    <property type="entry name" value="Bac_DnaA_C"/>
    <property type="match status" value="1"/>
</dbReference>
<dbReference type="PRINTS" id="PR00051">
    <property type="entry name" value="DNAA"/>
</dbReference>
<dbReference type="SMART" id="SM00382">
    <property type="entry name" value="AAA"/>
    <property type="match status" value="1"/>
</dbReference>
<dbReference type="SMART" id="SM00760">
    <property type="entry name" value="Bac_DnaA_C"/>
    <property type="match status" value="1"/>
</dbReference>
<dbReference type="SUPFAM" id="SSF52540">
    <property type="entry name" value="P-loop containing nucleoside triphosphate hydrolases"/>
    <property type="match status" value="1"/>
</dbReference>
<dbReference type="SUPFAM" id="SSF48295">
    <property type="entry name" value="TrpR-like"/>
    <property type="match status" value="1"/>
</dbReference>
<dbReference type="PROSITE" id="PS01008">
    <property type="entry name" value="DNAA"/>
    <property type="match status" value="1"/>
</dbReference>
<reference key="1">
    <citation type="journal article" date="2009" name="PLoS ONE">
        <title>Non mycobacterial virulence genes in the genome of the emerging pathogen Mycobacterium abscessus.</title>
        <authorList>
            <person name="Ripoll F."/>
            <person name="Pasek S."/>
            <person name="Schenowitz C."/>
            <person name="Dossat C."/>
            <person name="Barbe V."/>
            <person name="Rottman M."/>
            <person name="Macheras E."/>
            <person name="Heym B."/>
            <person name="Herrmann J.L."/>
            <person name="Daffe M."/>
            <person name="Brosch R."/>
            <person name="Risler J.L."/>
            <person name="Gaillard J.L."/>
        </authorList>
    </citation>
    <scope>NUCLEOTIDE SEQUENCE [LARGE SCALE GENOMIC DNA]</scope>
    <source>
        <strain>ATCC 19977 / DSM 44196 / CCUG 20993 / CIP 104536 / JCM 13569 / NCTC 13031 / TMC 1543 / L948</strain>
    </source>
</reference>
<feature type="chain" id="PRO_1000121997" description="Chromosomal replication initiator protein DnaA">
    <location>
        <begin position="1"/>
        <end position="491"/>
    </location>
</feature>
<feature type="region of interest" description="Domain I, interacts with DnaA modulators" evidence="1">
    <location>
        <begin position="1"/>
        <end position="86"/>
    </location>
</feature>
<feature type="region of interest" description="Domain II" evidence="1">
    <location>
        <begin position="86"/>
        <end position="150"/>
    </location>
</feature>
<feature type="region of interest" description="Domain III, AAA+ region" evidence="1">
    <location>
        <begin position="151"/>
        <end position="367"/>
    </location>
</feature>
<feature type="region of interest" description="Domain IV, binds dsDNA" evidence="1">
    <location>
        <begin position="368"/>
        <end position="491"/>
    </location>
</feature>
<feature type="binding site" evidence="1">
    <location>
        <position position="195"/>
    </location>
    <ligand>
        <name>ATP</name>
        <dbReference type="ChEBI" id="CHEBI:30616"/>
    </ligand>
</feature>
<feature type="binding site" evidence="1">
    <location>
        <position position="197"/>
    </location>
    <ligand>
        <name>ATP</name>
        <dbReference type="ChEBI" id="CHEBI:30616"/>
    </ligand>
</feature>
<feature type="binding site" evidence="1">
    <location>
        <position position="198"/>
    </location>
    <ligand>
        <name>ATP</name>
        <dbReference type="ChEBI" id="CHEBI:30616"/>
    </ligand>
</feature>
<feature type="binding site" evidence="1">
    <location>
        <position position="199"/>
    </location>
    <ligand>
        <name>ATP</name>
        <dbReference type="ChEBI" id="CHEBI:30616"/>
    </ligand>
</feature>
<name>DNAA_MYCA9</name>
<comment type="function">
    <text evidence="1">Plays an essential role in the initiation and regulation of chromosomal replication. ATP-DnaA binds to the origin of replication (oriC) to initiate formation of the DNA replication initiation complex once per cell cycle. Binds the DnaA box (a 9 base pair repeat at the origin) and separates the double-stranded (ds)DNA. Forms a right-handed helical filament on oriC DNA; dsDNA binds to the exterior of the filament while single-stranded (ss)DNA is stabiized in the filament's interior. The ATP-DnaA-oriC complex binds and stabilizes one strand of the AT-rich DNA unwinding element (DUE), permitting loading of DNA polymerase. After initiation quickly degrades to an ADP-DnaA complex that is not apt for DNA replication. Binds acidic phospholipids.</text>
</comment>
<comment type="subunit">
    <text evidence="1">Oligomerizes as a right-handed, spiral filament on DNA at oriC.</text>
</comment>
<comment type="subcellular location">
    <subcellularLocation>
        <location evidence="1">Cytoplasm</location>
    </subcellularLocation>
</comment>
<comment type="domain">
    <text evidence="1">Domain I is involved in oligomerization and binding regulators, domain II is flexibile and of varying length in different bacteria, domain III forms the AAA+ region, while domain IV binds dsDNA.</text>
</comment>
<comment type="similarity">
    <text evidence="1">Belongs to the DnaA family.</text>
</comment>
<proteinExistence type="inferred from homology"/>
<keyword id="KW-0067">ATP-binding</keyword>
<keyword id="KW-0963">Cytoplasm</keyword>
<keyword id="KW-0235">DNA replication</keyword>
<keyword id="KW-0238">DNA-binding</keyword>
<keyword id="KW-0446">Lipid-binding</keyword>
<keyword id="KW-0547">Nucleotide-binding</keyword>
<keyword id="KW-1185">Reference proteome</keyword>
<gene>
    <name evidence="1" type="primary">dnaA</name>
    <name type="ordered locus">MAB_0001</name>
</gene>
<organism>
    <name type="scientific">Mycobacteroides abscessus (strain ATCC 19977 / DSM 44196 / CCUG 20993 / CIP 104536 / JCM 13569 / NCTC 13031 / TMC 1543 / L948)</name>
    <name type="common">Mycobacterium abscessus</name>
    <dbReference type="NCBI Taxonomy" id="561007"/>
    <lineage>
        <taxon>Bacteria</taxon>
        <taxon>Bacillati</taxon>
        <taxon>Actinomycetota</taxon>
        <taxon>Actinomycetes</taxon>
        <taxon>Mycobacteriales</taxon>
        <taxon>Mycobacteriaceae</taxon>
        <taxon>Mycobacteroides</taxon>
        <taxon>Mycobacteroides abscessus</taxon>
    </lineage>
</organism>